<name>RL19_YERPS</name>
<accession>Q66E56</accession>
<dbReference type="EMBL" id="BX936398">
    <property type="protein sequence ID" value="CAH20077.1"/>
    <property type="molecule type" value="Genomic_DNA"/>
</dbReference>
<dbReference type="RefSeq" id="WP_002209461.1">
    <property type="nucleotide sequence ID" value="NZ_CP009712.1"/>
</dbReference>
<dbReference type="SMR" id="Q66E56"/>
<dbReference type="GeneID" id="96664344"/>
<dbReference type="KEGG" id="ypo:BZ17_1714"/>
<dbReference type="KEGG" id="yps:YPTB0837"/>
<dbReference type="PATRIC" id="fig|273123.14.peg.1819"/>
<dbReference type="Proteomes" id="UP000001011">
    <property type="component" value="Chromosome"/>
</dbReference>
<dbReference type="GO" id="GO:0022625">
    <property type="term" value="C:cytosolic large ribosomal subunit"/>
    <property type="evidence" value="ECO:0007669"/>
    <property type="project" value="TreeGrafter"/>
</dbReference>
<dbReference type="GO" id="GO:0003735">
    <property type="term" value="F:structural constituent of ribosome"/>
    <property type="evidence" value="ECO:0007669"/>
    <property type="project" value="InterPro"/>
</dbReference>
<dbReference type="GO" id="GO:0006412">
    <property type="term" value="P:translation"/>
    <property type="evidence" value="ECO:0007669"/>
    <property type="project" value="UniProtKB-UniRule"/>
</dbReference>
<dbReference type="FunFam" id="2.30.30.790:FF:000001">
    <property type="entry name" value="50S ribosomal protein L19"/>
    <property type="match status" value="1"/>
</dbReference>
<dbReference type="Gene3D" id="2.30.30.790">
    <property type="match status" value="1"/>
</dbReference>
<dbReference type="HAMAP" id="MF_00402">
    <property type="entry name" value="Ribosomal_bL19"/>
    <property type="match status" value="1"/>
</dbReference>
<dbReference type="InterPro" id="IPR001857">
    <property type="entry name" value="Ribosomal_bL19"/>
</dbReference>
<dbReference type="InterPro" id="IPR018257">
    <property type="entry name" value="Ribosomal_bL19_CS"/>
</dbReference>
<dbReference type="InterPro" id="IPR038657">
    <property type="entry name" value="Ribosomal_bL19_sf"/>
</dbReference>
<dbReference type="InterPro" id="IPR008991">
    <property type="entry name" value="Translation_prot_SH3-like_sf"/>
</dbReference>
<dbReference type="NCBIfam" id="TIGR01024">
    <property type="entry name" value="rplS_bact"/>
    <property type="match status" value="1"/>
</dbReference>
<dbReference type="PANTHER" id="PTHR15680:SF9">
    <property type="entry name" value="LARGE RIBOSOMAL SUBUNIT PROTEIN BL19M"/>
    <property type="match status" value="1"/>
</dbReference>
<dbReference type="PANTHER" id="PTHR15680">
    <property type="entry name" value="RIBOSOMAL PROTEIN L19"/>
    <property type="match status" value="1"/>
</dbReference>
<dbReference type="Pfam" id="PF01245">
    <property type="entry name" value="Ribosomal_L19"/>
    <property type="match status" value="1"/>
</dbReference>
<dbReference type="PIRSF" id="PIRSF002191">
    <property type="entry name" value="Ribosomal_L19"/>
    <property type="match status" value="1"/>
</dbReference>
<dbReference type="PRINTS" id="PR00061">
    <property type="entry name" value="RIBOSOMALL19"/>
</dbReference>
<dbReference type="SUPFAM" id="SSF50104">
    <property type="entry name" value="Translation proteins SH3-like domain"/>
    <property type="match status" value="1"/>
</dbReference>
<dbReference type="PROSITE" id="PS01015">
    <property type="entry name" value="RIBOSOMAL_L19"/>
    <property type="match status" value="1"/>
</dbReference>
<proteinExistence type="inferred from homology"/>
<organism>
    <name type="scientific">Yersinia pseudotuberculosis serotype I (strain IP32953)</name>
    <dbReference type="NCBI Taxonomy" id="273123"/>
    <lineage>
        <taxon>Bacteria</taxon>
        <taxon>Pseudomonadati</taxon>
        <taxon>Pseudomonadota</taxon>
        <taxon>Gammaproteobacteria</taxon>
        <taxon>Enterobacterales</taxon>
        <taxon>Yersiniaceae</taxon>
        <taxon>Yersinia</taxon>
    </lineage>
</organism>
<keyword id="KW-0687">Ribonucleoprotein</keyword>
<keyword id="KW-0689">Ribosomal protein</keyword>
<sequence>MSNIIKQIEQEQMKQDVPAFRPGDSVEVKVWVVEGSKKRLQAFEGVVIAIRNRGLHSAFTVRKISNGEGVERVFQTHSPVIDSITVKRRGAVRQAKLYYLRERTGKSARIKERLG</sequence>
<gene>
    <name evidence="1" type="primary">rplS</name>
    <name type="ordered locus">YPTB0837</name>
</gene>
<feature type="chain" id="PRO_0000163577" description="Large ribosomal subunit protein bL19">
    <location>
        <begin position="1"/>
        <end position="115"/>
    </location>
</feature>
<protein>
    <recommendedName>
        <fullName evidence="1">Large ribosomal subunit protein bL19</fullName>
    </recommendedName>
    <alternativeName>
        <fullName evidence="2">50S ribosomal protein L19</fullName>
    </alternativeName>
</protein>
<evidence type="ECO:0000255" key="1">
    <source>
        <dbReference type="HAMAP-Rule" id="MF_00402"/>
    </source>
</evidence>
<evidence type="ECO:0000305" key="2"/>
<comment type="function">
    <text evidence="1">This protein is located at the 30S-50S ribosomal subunit interface and may play a role in the structure and function of the aminoacyl-tRNA binding site.</text>
</comment>
<comment type="similarity">
    <text evidence="1">Belongs to the bacterial ribosomal protein bL19 family.</text>
</comment>
<reference key="1">
    <citation type="journal article" date="2004" name="Proc. Natl. Acad. Sci. U.S.A.">
        <title>Insights into the evolution of Yersinia pestis through whole-genome comparison with Yersinia pseudotuberculosis.</title>
        <authorList>
            <person name="Chain P.S.G."/>
            <person name="Carniel E."/>
            <person name="Larimer F.W."/>
            <person name="Lamerdin J."/>
            <person name="Stoutland P.O."/>
            <person name="Regala W.M."/>
            <person name="Georgescu A.M."/>
            <person name="Vergez L.M."/>
            <person name="Land M.L."/>
            <person name="Motin V.L."/>
            <person name="Brubaker R.R."/>
            <person name="Fowler J."/>
            <person name="Hinnebusch J."/>
            <person name="Marceau M."/>
            <person name="Medigue C."/>
            <person name="Simonet M."/>
            <person name="Chenal-Francisque V."/>
            <person name="Souza B."/>
            <person name="Dacheux D."/>
            <person name="Elliott J.M."/>
            <person name="Derbise A."/>
            <person name="Hauser L.J."/>
            <person name="Garcia E."/>
        </authorList>
    </citation>
    <scope>NUCLEOTIDE SEQUENCE [LARGE SCALE GENOMIC DNA]</scope>
    <source>
        <strain>IP32953</strain>
    </source>
</reference>